<feature type="peptide" id="PRO_1000188784" description="thr operon leader peptide">
    <location>
        <begin position="1"/>
        <end position="21"/>
    </location>
</feature>
<evidence type="ECO:0000255" key="1">
    <source>
        <dbReference type="HAMAP-Rule" id="MF_01907"/>
    </source>
</evidence>
<reference key="1">
    <citation type="journal article" date="2009" name="BMC Genomics">
        <title>Pseudogene accumulation in the evolutionary histories of Salmonella enterica serovars Paratyphi A and Typhi.</title>
        <authorList>
            <person name="Holt K.E."/>
            <person name="Thomson N.R."/>
            <person name="Wain J."/>
            <person name="Langridge G.C."/>
            <person name="Hasan R."/>
            <person name="Bhutta Z.A."/>
            <person name="Quail M.A."/>
            <person name="Norbertczak H."/>
            <person name="Walker D."/>
            <person name="Simmonds M."/>
            <person name="White B."/>
            <person name="Bason N."/>
            <person name="Mungall K."/>
            <person name="Dougan G."/>
            <person name="Parkhill J."/>
        </authorList>
    </citation>
    <scope>NUCLEOTIDE SEQUENCE [LARGE SCALE GENOMIC DNA]</scope>
    <source>
        <strain>AKU_12601</strain>
    </source>
</reference>
<dbReference type="EMBL" id="FM200053">
    <property type="protein sequence ID" value="CAR58108.1"/>
    <property type="molecule type" value="Genomic_DNA"/>
</dbReference>
<dbReference type="RefSeq" id="WP_001575544.1">
    <property type="nucleotide sequence ID" value="NC_011147.1"/>
</dbReference>
<dbReference type="KEGG" id="sek:SSPA0001"/>
<dbReference type="HOGENOM" id="CLU_221491_0_1_6"/>
<dbReference type="Proteomes" id="UP000001869">
    <property type="component" value="Chromosome"/>
</dbReference>
<dbReference type="GO" id="GO:0009088">
    <property type="term" value="P:threonine biosynthetic process"/>
    <property type="evidence" value="ECO:0007669"/>
    <property type="project" value="UniProtKB-UniRule"/>
</dbReference>
<dbReference type="GO" id="GO:0031556">
    <property type="term" value="P:transcriptional attenuation by ribosome"/>
    <property type="evidence" value="ECO:0007669"/>
    <property type="project" value="UniProtKB-UniRule"/>
</dbReference>
<dbReference type="HAMAP" id="MF_01907">
    <property type="entry name" value="Leader_Thr"/>
    <property type="match status" value="1"/>
</dbReference>
<dbReference type="InterPro" id="IPR011720">
    <property type="entry name" value="Thr_lead_pept"/>
</dbReference>
<dbReference type="NCBIfam" id="NF007329">
    <property type="entry name" value="PRK09816.1"/>
    <property type="match status" value="1"/>
</dbReference>
<dbReference type="NCBIfam" id="TIGR02077">
    <property type="entry name" value="thr_lead_pep"/>
    <property type="match status" value="1"/>
</dbReference>
<dbReference type="Pfam" id="PF08254">
    <property type="entry name" value="Leader_Thr"/>
    <property type="match status" value="1"/>
</dbReference>
<protein>
    <recommendedName>
        <fullName evidence="1">thr operon leader peptide</fullName>
    </recommendedName>
    <alternativeName>
        <fullName evidence="1">thr operon attenuator</fullName>
    </alternativeName>
</protein>
<name>LPT_SALPK</name>
<proteinExistence type="inferred from homology"/>
<sequence>MNRISTTTITTITITTGNGAG</sequence>
<organism>
    <name type="scientific">Salmonella paratyphi A (strain AKU_12601)</name>
    <dbReference type="NCBI Taxonomy" id="554290"/>
    <lineage>
        <taxon>Bacteria</taxon>
        <taxon>Pseudomonadati</taxon>
        <taxon>Pseudomonadota</taxon>
        <taxon>Gammaproteobacteria</taxon>
        <taxon>Enterobacterales</taxon>
        <taxon>Enterobacteriaceae</taxon>
        <taxon>Salmonella</taxon>
    </lineage>
</organism>
<comment type="function">
    <text evidence="1">This protein is involved in control of the biosynthesis of threonine.</text>
</comment>
<comment type="similarity">
    <text evidence="1">Belongs to the thr operon leader peptide family.</text>
</comment>
<keyword id="KW-0028">Amino-acid biosynthesis</keyword>
<keyword id="KW-0428">Leader peptide</keyword>
<keyword id="KW-0791">Threonine biosynthesis</keyword>
<gene>
    <name evidence="1" type="primary">thrL</name>
    <name type="ordered locus">SSPA0001</name>
</gene>
<accession>B5BLG7</accession>